<sequence length="170" mass="18703">MQNRTGLILCALALLMGFLMVCLGAFFISWGSIFDCQGSLIAAYLLLPLGFVILLSGIFWSNYRQVTESKGVLRHMLRQHLAHGALPVATVDRPDFYPPAYEESLEVEKQSCPAEREASGIPPPLYTETGLEFQDGNDSHPEAPPSYRESIAGLVVTAISEDAQRRGQEC</sequence>
<proteinExistence type="evidence at protein level"/>
<accession>Q8N6L7</accession>
<comment type="interaction">
    <interactant intactId="EBI-8787626">
        <id>Q8N6L7</id>
    </interactant>
    <interactant intactId="EBI-20141748">
        <id>P52954</id>
        <label>LBX1</label>
    </interactant>
    <organismsDiffer>false</organismsDiffer>
    <experiments>3</experiments>
</comment>
<comment type="interaction">
    <interactant intactId="EBI-8787626">
        <id>Q8N6L7</id>
    </interactant>
    <interactant intactId="EBI-18159983">
        <id>Q3KNW5</id>
        <label>SLC10A6</label>
    </interactant>
    <organismsDiffer>false</organismsDiffer>
    <experiments>3</experiments>
</comment>
<comment type="interaction">
    <interactant intactId="EBI-8787626">
        <id>Q8N6L7</id>
    </interactant>
    <interactant intactId="EBI-348587">
        <id>Q9BVK8</id>
        <label>TMEM147</label>
    </interactant>
    <organismsDiffer>false</organismsDiffer>
    <experiments>3</experiments>
</comment>
<comment type="interaction">
    <interactant intactId="EBI-8787626">
        <id>Q8N6L7</id>
    </interactant>
    <interactant intactId="EBI-1188298">
        <id>O95292</id>
        <label>VAPB</label>
    </interactant>
    <organismsDiffer>false</organismsDiffer>
    <experiments>3</experiments>
</comment>
<comment type="subcellular location">
    <subcellularLocation>
        <location evidence="3">Membrane</location>
        <topology evidence="3">Multi-pass membrane protein</topology>
    </subcellularLocation>
</comment>
<protein>
    <recommendedName>
        <fullName>Transmembrane protein 252</fullName>
    </recommendedName>
</protein>
<evidence type="ECO:0000255" key="1"/>
<evidence type="ECO:0000256" key="2">
    <source>
        <dbReference type="SAM" id="MobiDB-lite"/>
    </source>
</evidence>
<evidence type="ECO:0000305" key="3"/>
<feature type="chain" id="PRO_0000089707" description="Transmembrane protein 252">
    <location>
        <begin position="1"/>
        <end position="170"/>
    </location>
</feature>
<feature type="transmembrane region" description="Helical" evidence="1">
    <location>
        <begin position="8"/>
        <end position="28"/>
    </location>
</feature>
<feature type="transmembrane region" description="Helical" evidence="1">
    <location>
        <begin position="40"/>
        <end position="60"/>
    </location>
</feature>
<feature type="region of interest" description="Disordered" evidence="2">
    <location>
        <begin position="112"/>
        <end position="147"/>
    </location>
</feature>
<organism>
    <name type="scientific">Homo sapiens</name>
    <name type="common">Human</name>
    <dbReference type="NCBI Taxonomy" id="9606"/>
    <lineage>
        <taxon>Eukaryota</taxon>
        <taxon>Metazoa</taxon>
        <taxon>Chordata</taxon>
        <taxon>Craniata</taxon>
        <taxon>Vertebrata</taxon>
        <taxon>Euteleostomi</taxon>
        <taxon>Mammalia</taxon>
        <taxon>Eutheria</taxon>
        <taxon>Euarchontoglires</taxon>
        <taxon>Primates</taxon>
        <taxon>Haplorrhini</taxon>
        <taxon>Catarrhini</taxon>
        <taxon>Hominidae</taxon>
        <taxon>Homo</taxon>
    </lineage>
</organism>
<reference key="1">
    <citation type="journal article" date="2004" name="Nature">
        <title>DNA sequence and analysis of human chromosome 9.</title>
        <authorList>
            <person name="Humphray S.J."/>
            <person name="Oliver K."/>
            <person name="Hunt A.R."/>
            <person name="Plumb R.W."/>
            <person name="Loveland J.E."/>
            <person name="Howe K.L."/>
            <person name="Andrews T.D."/>
            <person name="Searle S."/>
            <person name="Hunt S.E."/>
            <person name="Scott C.E."/>
            <person name="Jones M.C."/>
            <person name="Ainscough R."/>
            <person name="Almeida J.P."/>
            <person name="Ambrose K.D."/>
            <person name="Ashwell R.I.S."/>
            <person name="Babbage A.K."/>
            <person name="Babbage S."/>
            <person name="Bagguley C.L."/>
            <person name="Bailey J."/>
            <person name="Banerjee R."/>
            <person name="Barker D.J."/>
            <person name="Barlow K.F."/>
            <person name="Bates K."/>
            <person name="Beasley H."/>
            <person name="Beasley O."/>
            <person name="Bird C.P."/>
            <person name="Bray-Allen S."/>
            <person name="Brown A.J."/>
            <person name="Brown J.Y."/>
            <person name="Burford D."/>
            <person name="Burrill W."/>
            <person name="Burton J."/>
            <person name="Carder C."/>
            <person name="Carter N.P."/>
            <person name="Chapman J.C."/>
            <person name="Chen Y."/>
            <person name="Clarke G."/>
            <person name="Clark S.Y."/>
            <person name="Clee C.M."/>
            <person name="Clegg S."/>
            <person name="Collier R.E."/>
            <person name="Corby N."/>
            <person name="Crosier M."/>
            <person name="Cummings A.T."/>
            <person name="Davies J."/>
            <person name="Dhami P."/>
            <person name="Dunn M."/>
            <person name="Dutta I."/>
            <person name="Dyer L.W."/>
            <person name="Earthrowl M.E."/>
            <person name="Faulkner L."/>
            <person name="Fleming C.J."/>
            <person name="Frankish A."/>
            <person name="Frankland J.A."/>
            <person name="French L."/>
            <person name="Fricker D.G."/>
            <person name="Garner P."/>
            <person name="Garnett J."/>
            <person name="Ghori J."/>
            <person name="Gilbert J.G.R."/>
            <person name="Glison C."/>
            <person name="Grafham D.V."/>
            <person name="Gribble S."/>
            <person name="Griffiths C."/>
            <person name="Griffiths-Jones S."/>
            <person name="Grocock R."/>
            <person name="Guy J."/>
            <person name="Hall R.E."/>
            <person name="Hammond S."/>
            <person name="Harley J.L."/>
            <person name="Harrison E.S.I."/>
            <person name="Hart E.A."/>
            <person name="Heath P.D."/>
            <person name="Henderson C.D."/>
            <person name="Hopkins B.L."/>
            <person name="Howard P.J."/>
            <person name="Howden P.J."/>
            <person name="Huckle E."/>
            <person name="Johnson C."/>
            <person name="Johnson D."/>
            <person name="Joy A.A."/>
            <person name="Kay M."/>
            <person name="Keenan S."/>
            <person name="Kershaw J.K."/>
            <person name="Kimberley A.M."/>
            <person name="King A."/>
            <person name="Knights A."/>
            <person name="Laird G.K."/>
            <person name="Langford C."/>
            <person name="Lawlor S."/>
            <person name="Leongamornlert D.A."/>
            <person name="Leversha M."/>
            <person name="Lloyd C."/>
            <person name="Lloyd D.M."/>
            <person name="Lovell J."/>
            <person name="Martin S."/>
            <person name="Mashreghi-Mohammadi M."/>
            <person name="Matthews L."/>
            <person name="McLaren S."/>
            <person name="McLay K.E."/>
            <person name="McMurray A."/>
            <person name="Milne S."/>
            <person name="Nickerson T."/>
            <person name="Nisbett J."/>
            <person name="Nordsiek G."/>
            <person name="Pearce A.V."/>
            <person name="Peck A.I."/>
            <person name="Porter K.M."/>
            <person name="Pandian R."/>
            <person name="Pelan S."/>
            <person name="Phillimore B."/>
            <person name="Povey S."/>
            <person name="Ramsey Y."/>
            <person name="Rand V."/>
            <person name="Scharfe M."/>
            <person name="Sehra H.K."/>
            <person name="Shownkeen R."/>
            <person name="Sims S.K."/>
            <person name="Skuce C.D."/>
            <person name="Smith M."/>
            <person name="Steward C.A."/>
            <person name="Swarbreck D."/>
            <person name="Sycamore N."/>
            <person name="Tester J."/>
            <person name="Thorpe A."/>
            <person name="Tracey A."/>
            <person name="Tromans A."/>
            <person name="Thomas D.W."/>
            <person name="Wall M."/>
            <person name="Wallis J.M."/>
            <person name="West A.P."/>
            <person name="Whitehead S.L."/>
            <person name="Willey D.L."/>
            <person name="Williams S.A."/>
            <person name="Wilming L."/>
            <person name="Wray P.W."/>
            <person name="Young L."/>
            <person name="Ashurst J.L."/>
            <person name="Coulson A."/>
            <person name="Blocker H."/>
            <person name="Durbin R.M."/>
            <person name="Sulston J.E."/>
            <person name="Hubbard T."/>
            <person name="Jackson M.J."/>
            <person name="Bentley D.R."/>
            <person name="Beck S."/>
            <person name="Rogers J."/>
            <person name="Dunham I."/>
        </authorList>
    </citation>
    <scope>NUCLEOTIDE SEQUENCE [LARGE SCALE GENOMIC DNA]</scope>
</reference>
<reference key="2">
    <citation type="journal article" date="2004" name="Genome Res.">
        <title>The status, quality, and expansion of the NIH full-length cDNA project: the Mammalian Gene Collection (MGC).</title>
        <authorList>
            <consortium name="The MGC Project Team"/>
        </authorList>
    </citation>
    <scope>NUCLEOTIDE SEQUENCE [LARGE SCALE MRNA]</scope>
    <source>
        <tissue>Colon</tissue>
    </source>
</reference>
<dbReference type="EMBL" id="AL353616">
    <property type="status" value="NOT_ANNOTATED_CDS"/>
    <property type="molecule type" value="Genomic_DNA"/>
</dbReference>
<dbReference type="EMBL" id="BC029780">
    <property type="protein sequence ID" value="AAH29780.1"/>
    <property type="molecule type" value="mRNA"/>
</dbReference>
<dbReference type="CCDS" id="CCDS35040.1"/>
<dbReference type="RefSeq" id="NP_694969.1">
    <property type="nucleotide sequence ID" value="NM_153237.2"/>
</dbReference>
<dbReference type="BioGRID" id="127986">
    <property type="interactions" value="10"/>
</dbReference>
<dbReference type="FunCoup" id="Q8N6L7">
    <property type="interactions" value="80"/>
</dbReference>
<dbReference type="IntAct" id="Q8N6L7">
    <property type="interactions" value="11"/>
</dbReference>
<dbReference type="STRING" id="9606.ENSP00000366528"/>
<dbReference type="iPTMnet" id="Q8N6L7"/>
<dbReference type="PhosphoSitePlus" id="Q8N6L7"/>
<dbReference type="BioMuta" id="TMEM252"/>
<dbReference type="DMDM" id="68565213"/>
<dbReference type="jPOST" id="Q8N6L7"/>
<dbReference type="MassIVE" id="Q8N6L7"/>
<dbReference type="PaxDb" id="9606-ENSP00000366528"/>
<dbReference type="PeptideAtlas" id="Q8N6L7"/>
<dbReference type="ProteomicsDB" id="72190"/>
<dbReference type="Antibodypedia" id="51987">
    <property type="antibodies" value="37 antibodies from 7 providers"/>
</dbReference>
<dbReference type="DNASU" id="169693"/>
<dbReference type="Ensembl" id="ENST00000377311.4">
    <property type="protein sequence ID" value="ENSP00000366528.4"/>
    <property type="gene ID" value="ENSG00000181778.5"/>
</dbReference>
<dbReference type="GeneID" id="169693"/>
<dbReference type="KEGG" id="hsa:169693"/>
<dbReference type="MANE-Select" id="ENST00000377311.4">
    <property type="protein sequence ID" value="ENSP00000366528.4"/>
    <property type="RefSeq nucleotide sequence ID" value="NM_153237.2"/>
    <property type="RefSeq protein sequence ID" value="NP_694969.1"/>
</dbReference>
<dbReference type="UCSC" id="uc004agt.4">
    <property type="organism name" value="human"/>
</dbReference>
<dbReference type="AGR" id="HGNC:28537"/>
<dbReference type="CTD" id="169693"/>
<dbReference type="DisGeNET" id="169693"/>
<dbReference type="GeneCards" id="TMEM252"/>
<dbReference type="HGNC" id="HGNC:28537">
    <property type="gene designation" value="TMEM252"/>
</dbReference>
<dbReference type="HPA" id="ENSG00000181778">
    <property type="expression patterns" value="Group enriched (intestine, kidney)"/>
</dbReference>
<dbReference type="neXtProt" id="NX_Q8N6L7"/>
<dbReference type="OpenTargets" id="ENSG00000181778"/>
<dbReference type="PharmGKB" id="PA134989660"/>
<dbReference type="VEuPathDB" id="HostDB:ENSG00000181778"/>
<dbReference type="eggNOG" id="ENOG502S6KQ">
    <property type="taxonomic scope" value="Eukaryota"/>
</dbReference>
<dbReference type="GeneTree" id="ENSGT00390000005250"/>
<dbReference type="HOGENOM" id="CLU_117690_0_0_1"/>
<dbReference type="InParanoid" id="Q8N6L7"/>
<dbReference type="OMA" id="LYTEMGL"/>
<dbReference type="OrthoDB" id="9896070at2759"/>
<dbReference type="PAN-GO" id="Q8N6L7">
    <property type="GO annotations" value="0 GO annotations based on evolutionary models"/>
</dbReference>
<dbReference type="PhylomeDB" id="Q8N6L7"/>
<dbReference type="TreeFam" id="TF337811"/>
<dbReference type="PathwayCommons" id="Q8N6L7"/>
<dbReference type="SignaLink" id="Q8N6L7"/>
<dbReference type="BioGRID-ORCS" id="169693">
    <property type="hits" value="10 hits in 1144 CRISPR screens"/>
</dbReference>
<dbReference type="GenomeRNAi" id="169693"/>
<dbReference type="Pharos" id="Q8N6L7">
    <property type="development level" value="Tdark"/>
</dbReference>
<dbReference type="PRO" id="PR:Q8N6L7"/>
<dbReference type="Proteomes" id="UP000005640">
    <property type="component" value="Chromosome 9"/>
</dbReference>
<dbReference type="RNAct" id="Q8N6L7">
    <property type="molecule type" value="protein"/>
</dbReference>
<dbReference type="Bgee" id="ENSG00000181778">
    <property type="expression patterns" value="Expressed in secondary oocyte and 94 other cell types or tissues"/>
</dbReference>
<dbReference type="GO" id="GO:0016020">
    <property type="term" value="C:membrane"/>
    <property type="evidence" value="ECO:0007669"/>
    <property type="project" value="UniProtKB-SubCell"/>
</dbReference>
<dbReference type="InterPro" id="IPR031363">
    <property type="entry name" value="TMEM252"/>
</dbReference>
<dbReference type="PANTHER" id="PTHR35682">
    <property type="entry name" value="TRANSMEMBRANE PROTEIN 252"/>
    <property type="match status" value="1"/>
</dbReference>
<dbReference type="PANTHER" id="PTHR35682:SF1">
    <property type="entry name" value="TRANSMEMBRANE PROTEIN 252"/>
    <property type="match status" value="1"/>
</dbReference>
<dbReference type="Pfam" id="PF15664">
    <property type="entry name" value="TMEM252"/>
    <property type="match status" value="1"/>
</dbReference>
<gene>
    <name type="primary">TMEM252</name>
    <name type="synonym">C9orf71</name>
</gene>
<keyword id="KW-0472">Membrane</keyword>
<keyword id="KW-1185">Reference proteome</keyword>
<keyword id="KW-0812">Transmembrane</keyword>
<keyword id="KW-1133">Transmembrane helix</keyword>
<name>TM252_HUMAN</name>